<organism>
    <name type="scientific">Cutibacterium acnes (strain DSM 16379 / KPA171202)</name>
    <name type="common">Propionibacterium acnes</name>
    <dbReference type="NCBI Taxonomy" id="267747"/>
    <lineage>
        <taxon>Bacteria</taxon>
        <taxon>Bacillati</taxon>
        <taxon>Actinomycetota</taxon>
        <taxon>Actinomycetes</taxon>
        <taxon>Propionibacteriales</taxon>
        <taxon>Propionibacteriaceae</taxon>
        <taxon>Cutibacterium</taxon>
    </lineage>
</organism>
<reference key="1">
    <citation type="journal article" date="2004" name="Science">
        <title>The complete genome sequence of Propionibacterium acnes, a commensal of human skin.</title>
        <authorList>
            <person name="Brueggemann H."/>
            <person name="Henne A."/>
            <person name="Hoster F."/>
            <person name="Liesegang H."/>
            <person name="Wiezer A."/>
            <person name="Strittmatter A."/>
            <person name="Hujer S."/>
            <person name="Duerre P."/>
            <person name="Gottschalk G."/>
        </authorList>
    </citation>
    <scope>NUCLEOTIDE SEQUENCE [LARGE SCALE GENOMIC DNA]</scope>
    <source>
        <strain>DSM 16379 / KPA171202</strain>
    </source>
</reference>
<proteinExistence type="inferred from homology"/>
<evidence type="ECO:0000255" key="1">
    <source>
        <dbReference type="HAMAP-Rule" id="MF_00260"/>
    </source>
</evidence>
<evidence type="ECO:0000305" key="2"/>
<gene>
    <name evidence="1" type="primary">hemC</name>
    <name type="ordered locus">PPA0304</name>
</gene>
<protein>
    <recommendedName>
        <fullName evidence="1">Porphobilinogen deaminase</fullName>
        <shortName evidence="1">PBG</shortName>
        <ecNumber evidence="1">2.5.1.61</ecNumber>
    </recommendedName>
    <alternativeName>
        <fullName evidence="1">Hydroxymethylbilane synthase</fullName>
        <shortName evidence="1">HMBS</shortName>
    </alternativeName>
    <alternativeName>
        <fullName evidence="1">Pre-uroporphyrinogen synthase</fullName>
    </alternativeName>
</protein>
<feature type="chain" id="PRO_0000142969" description="Porphobilinogen deaminase">
    <location>
        <begin position="1"/>
        <end position="334"/>
    </location>
</feature>
<feature type="modified residue" description="S-(dipyrrolylmethanemethyl)cysteine" evidence="1">
    <location>
        <position position="250"/>
    </location>
</feature>
<comment type="function">
    <text evidence="1">Tetrapolymerization of the monopyrrole PBG into the hydroxymethylbilane pre-uroporphyrinogen in several discrete steps.</text>
</comment>
<comment type="catalytic activity">
    <reaction evidence="1">
        <text>4 porphobilinogen + H2O = hydroxymethylbilane + 4 NH4(+)</text>
        <dbReference type="Rhea" id="RHEA:13185"/>
        <dbReference type="ChEBI" id="CHEBI:15377"/>
        <dbReference type="ChEBI" id="CHEBI:28938"/>
        <dbReference type="ChEBI" id="CHEBI:57845"/>
        <dbReference type="ChEBI" id="CHEBI:58126"/>
        <dbReference type="EC" id="2.5.1.61"/>
    </reaction>
</comment>
<comment type="cofactor">
    <cofactor evidence="1">
        <name>dipyrromethane</name>
        <dbReference type="ChEBI" id="CHEBI:60342"/>
    </cofactor>
    <text evidence="1">Binds 1 dipyrromethane group covalently.</text>
</comment>
<comment type="pathway">
    <text evidence="1">Porphyrin-containing compound metabolism; protoporphyrin-IX biosynthesis; coproporphyrinogen-III from 5-aminolevulinate: step 2/4.</text>
</comment>
<comment type="subunit">
    <text evidence="1">Monomer.</text>
</comment>
<comment type="miscellaneous">
    <text evidence="1">The porphobilinogen subunits are added to the dipyrromethane group.</text>
</comment>
<comment type="similarity">
    <text evidence="1">Belongs to the HMBS family.</text>
</comment>
<comment type="sequence caution" evidence="2">
    <conflict type="erroneous initiation">
        <sequence resource="EMBL-CDS" id="AAT82061"/>
    </conflict>
</comment>
<sequence>MSAIRLGTRASTLATTQSEMVAGLLRSEGLDVNLTTITTHGDTSTASLAAMGGIGVFASAIRAALLEGEADIAVHSFKDLPTGRPLGLAIGAVPARADPRDALVARDGLTLHDLPQEASVGTGSPRRAAQLLAVRPDLTIVDIRGNVDTRLGRVKGLGRYAKNGGKEDLDAVVLAASGLARLGHSGAVTEFLDPSVVLPAPAQGALAVECRTADSRHGKLAKALARIDDRRTRLAATAERAVLSHLEAGCAAPIGALAQLKPVSGKSLQVLTLDVVVAAVDGSRTVREQVSVELPAEVEPALAAAHTLGVTAAEELLDDGAADVADLKASGSTR</sequence>
<keyword id="KW-0627">Porphyrin biosynthesis</keyword>
<keyword id="KW-0808">Transferase</keyword>
<dbReference type="EC" id="2.5.1.61" evidence="1"/>
<dbReference type="EMBL" id="AE017283">
    <property type="protein sequence ID" value="AAT82061.1"/>
    <property type="status" value="ALT_INIT"/>
    <property type="molecule type" value="Genomic_DNA"/>
</dbReference>
<dbReference type="RefSeq" id="WP_002518712.1">
    <property type="nucleotide sequence ID" value="NZ_CP025935.1"/>
</dbReference>
<dbReference type="SMR" id="Q6AB05"/>
<dbReference type="EnsemblBacteria" id="AAT82061">
    <property type="protein sequence ID" value="AAT82061"/>
    <property type="gene ID" value="PPA0304"/>
</dbReference>
<dbReference type="GeneID" id="92856289"/>
<dbReference type="KEGG" id="pac:PPA0304"/>
<dbReference type="eggNOG" id="COG0181">
    <property type="taxonomic scope" value="Bacteria"/>
</dbReference>
<dbReference type="HOGENOM" id="CLU_019704_1_0_11"/>
<dbReference type="UniPathway" id="UPA00251">
    <property type="reaction ID" value="UER00319"/>
</dbReference>
<dbReference type="Proteomes" id="UP000000603">
    <property type="component" value="Chromosome"/>
</dbReference>
<dbReference type="GO" id="GO:0005737">
    <property type="term" value="C:cytoplasm"/>
    <property type="evidence" value="ECO:0007669"/>
    <property type="project" value="TreeGrafter"/>
</dbReference>
<dbReference type="GO" id="GO:0004418">
    <property type="term" value="F:hydroxymethylbilane synthase activity"/>
    <property type="evidence" value="ECO:0007669"/>
    <property type="project" value="UniProtKB-UniRule"/>
</dbReference>
<dbReference type="GO" id="GO:0006782">
    <property type="term" value="P:protoporphyrinogen IX biosynthetic process"/>
    <property type="evidence" value="ECO:0007669"/>
    <property type="project" value="UniProtKB-UniRule"/>
</dbReference>
<dbReference type="FunFam" id="3.40.190.10:FF:000005">
    <property type="entry name" value="Porphobilinogen deaminase"/>
    <property type="match status" value="1"/>
</dbReference>
<dbReference type="Gene3D" id="3.40.190.10">
    <property type="entry name" value="Periplasmic binding protein-like II"/>
    <property type="match status" value="2"/>
</dbReference>
<dbReference type="Gene3D" id="3.30.160.40">
    <property type="entry name" value="Porphobilinogen deaminase, C-terminal domain"/>
    <property type="match status" value="1"/>
</dbReference>
<dbReference type="HAMAP" id="MF_00260">
    <property type="entry name" value="Porphobil_deam"/>
    <property type="match status" value="1"/>
</dbReference>
<dbReference type="InterPro" id="IPR000860">
    <property type="entry name" value="HemC"/>
</dbReference>
<dbReference type="InterPro" id="IPR022419">
    <property type="entry name" value="Porphobilin_deaminase_cofac_BS"/>
</dbReference>
<dbReference type="InterPro" id="IPR022417">
    <property type="entry name" value="Porphobilin_deaminase_N"/>
</dbReference>
<dbReference type="InterPro" id="IPR022418">
    <property type="entry name" value="Porphobilinogen_deaminase_C"/>
</dbReference>
<dbReference type="InterPro" id="IPR036803">
    <property type="entry name" value="Porphobilinogen_deaminase_C_sf"/>
</dbReference>
<dbReference type="NCBIfam" id="TIGR00212">
    <property type="entry name" value="hemC"/>
    <property type="match status" value="1"/>
</dbReference>
<dbReference type="PANTHER" id="PTHR11557">
    <property type="entry name" value="PORPHOBILINOGEN DEAMINASE"/>
    <property type="match status" value="1"/>
</dbReference>
<dbReference type="PANTHER" id="PTHR11557:SF0">
    <property type="entry name" value="PORPHOBILINOGEN DEAMINASE"/>
    <property type="match status" value="1"/>
</dbReference>
<dbReference type="Pfam" id="PF01379">
    <property type="entry name" value="Porphobil_deam"/>
    <property type="match status" value="1"/>
</dbReference>
<dbReference type="Pfam" id="PF03900">
    <property type="entry name" value="Porphobil_deamC"/>
    <property type="match status" value="1"/>
</dbReference>
<dbReference type="PIRSF" id="PIRSF001438">
    <property type="entry name" value="4pyrrol_synth_OHMeBilane_synth"/>
    <property type="match status" value="1"/>
</dbReference>
<dbReference type="PRINTS" id="PR00151">
    <property type="entry name" value="PORPHBDMNASE"/>
</dbReference>
<dbReference type="SUPFAM" id="SSF53850">
    <property type="entry name" value="Periplasmic binding protein-like II"/>
    <property type="match status" value="1"/>
</dbReference>
<dbReference type="SUPFAM" id="SSF54782">
    <property type="entry name" value="Porphobilinogen deaminase (hydroxymethylbilane synthase), C-terminal domain"/>
    <property type="match status" value="1"/>
</dbReference>
<dbReference type="PROSITE" id="PS00533">
    <property type="entry name" value="PORPHOBILINOGEN_DEAM"/>
    <property type="match status" value="1"/>
</dbReference>
<name>HEM3_CUTAK</name>
<accession>Q6AB05</accession>